<comment type="function">
    <text evidence="1">Specifically methylates the pseudouridine at position 1915 (m3Psi1915) in 23S rRNA.</text>
</comment>
<comment type="catalytic activity">
    <reaction evidence="1">
        <text>pseudouridine(1915) in 23S rRNA + S-adenosyl-L-methionine = N(3)-methylpseudouridine(1915) in 23S rRNA + S-adenosyl-L-homocysteine + H(+)</text>
        <dbReference type="Rhea" id="RHEA:42752"/>
        <dbReference type="Rhea" id="RHEA-COMP:10221"/>
        <dbReference type="Rhea" id="RHEA-COMP:10222"/>
        <dbReference type="ChEBI" id="CHEBI:15378"/>
        <dbReference type="ChEBI" id="CHEBI:57856"/>
        <dbReference type="ChEBI" id="CHEBI:59789"/>
        <dbReference type="ChEBI" id="CHEBI:65314"/>
        <dbReference type="ChEBI" id="CHEBI:74486"/>
        <dbReference type="EC" id="2.1.1.177"/>
    </reaction>
</comment>
<comment type="subunit">
    <text evidence="1">Homodimer.</text>
</comment>
<comment type="subcellular location">
    <subcellularLocation>
        <location evidence="1">Cytoplasm</location>
    </subcellularLocation>
</comment>
<comment type="similarity">
    <text evidence="1">Belongs to the RNA methyltransferase RlmH family.</text>
</comment>
<evidence type="ECO:0000255" key="1">
    <source>
        <dbReference type="HAMAP-Rule" id="MF_00658"/>
    </source>
</evidence>
<feature type="chain" id="PRO_0000198199" description="Ribosomal RNA large subunit methyltransferase H">
    <location>
        <begin position="1"/>
        <end position="144"/>
    </location>
</feature>
<feature type="binding site" evidence="1">
    <location>
        <position position="63"/>
    </location>
    <ligand>
        <name>S-adenosyl-L-methionine</name>
        <dbReference type="ChEBI" id="CHEBI:59789"/>
    </ligand>
</feature>
<feature type="binding site" evidence="1">
    <location>
        <position position="92"/>
    </location>
    <ligand>
        <name>S-adenosyl-L-methionine</name>
        <dbReference type="ChEBI" id="CHEBI:59789"/>
    </ligand>
</feature>
<feature type="binding site" evidence="1">
    <location>
        <begin position="111"/>
        <end position="116"/>
    </location>
    <ligand>
        <name>S-adenosyl-L-methionine</name>
        <dbReference type="ChEBI" id="CHEBI:59789"/>
    </ligand>
</feature>
<keyword id="KW-0963">Cytoplasm</keyword>
<keyword id="KW-0489">Methyltransferase</keyword>
<keyword id="KW-0698">rRNA processing</keyword>
<keyword id="KW-0949">S-adenosyl-L-methionine</keyword>
<keyword id="KW-0808">Transferase</keyword>
<protein>
    <recommendedName>
        <fullName evidence="1">Ribosomal RNA large subunit methyltransferase H</fullName>
        <ecNumber evidence="1">2.1.1.177</ecNumber>
    </recommendedName>
    <alternativeName>
        <fullName evidence="1">23S rRNA (pseudouridine1915-N3)-methyltransferase</fullName>
    </alternativeName>
    <alternativeName>
        <fullName evidence="1">23S rRNA m3Psi1915 methyltransferase</fullName>
    </alternativeName>
    <alternativeName>
        <fullName evidence="1">rRNA (pseudouridine-N3-)-methyltransferase RlmH</fullName>
    </alternativeName>
</protein>
<proteinExistence type="inferred from homology"/>
<reference key="1">
    <citation type="journal article" date="2003" name="Nature">
        <title>The genome of a motile marine Synechococcus.</title>
        <authorList>
            <person name="Palenik B."/>
            <person name="Brahamsha B."/>
            <person name="Larimer F.W."/>
            <person name="Land M.L."/>
            <person name="Hauser L."/>
            <person name="Chain P."/>
            <person name="Lamerdin J.E."/>
            <person name="Regala W."/>
            <person name="Allen E.E."/>
            <person name="McCarren J."/>
            <person name="Paulsen I.T."/>
            <person name="Dufresne A."/>
            <person name="Partensky F."/>
            <person name="Webb E.A."/>
            <person name="Waterbury J."/>
        </authorList>
    </citation>
    <scope>NUCLEOTIDE SEQUENCE [LARGE SCALE GENOMIC DNA]</scope>
    <source>
        <strain>WH8102</strain>
    </source>
</reference>
<organism>
    <name type="scientific">Parasynechococcus marenigrum (strain WH8102)</name>
    <dbReference type="NCBI Taxonomy" id="84588"/>
    <lineage>
        <taxon>Bacteria</taxon>
        <taxon>Bacillati</taxon>
        <taxon>Cyanobacteriota</taxon>
        <taxon>Cyanophyceae</taxon>
        <taxon>Synechococcales</taxon>
        <taxon>Prochlorococcaceae</taxon>
        <taxon>Parasynechococcus</taxon>
        <taxon>Parasynechococcus marenigrum</taxon>
    </lineage>
</organism>
<sequence>MNPSRCRILAVGKVRRSWIQDGIELYRKRLPGLEIIEIRDSTPDKEADSIRASLRPNEHVIALMEEGDAVGSIPFARRLDQLGNQRLAFVIGGADGLTNELKGRAHWQLSLSPMTFPHELARLMLIEQLFRAQAILQGSPYHRA</sequence>
<name>RLMH_PARMW</name>
<dbReference type="EC" id="2.1.1.177" evidence="1"/>
<dbReference type="EMBL" id="BX569691">
    <property type="protein sequence ID" value="CAE07563.1"/>
    <property type="molecule type" value="Genomic_DNA"/>
</dbReference>
<dbReference type="RefSeq" id="WP_011127913.1">
    <property type="nucleotide sequence ID" value="NC_005070.1"/>
</dbReference>
<dbReference type="SMR" id="Q7U7D7"/>
<dbReference type="STRING" id="84588.SYNW1048"/>
<dbReference type="KEGG" id="syw:SYNW1048"/>
<dbReference type="eggNOG" id="COG1576">
    <property type="taxonomic scope" value="Bacteria"/>
</dbReference>
<dbReference type="HOGENOM" id="CLU_100552_0_0_3"/>
<dbReference type="Proteomes" id="UP000001422">
    <property type="component" value="Chromosome"/>
</dbReference>
<dbReference type="GO" id="GO:0005737">
    <property type="term" value="C:cytoplasm"/>
    <property type="evidence" value="ECO:0007669"/>
    <property type="project" value="UniProtKB-SubCell"/>
</dbReference>
<dbReference type="GO" id="GO:0070038">
    <property type="term" value="F:rRNA (pseudouridine-N3-)-methyltransferase activity"/>
    <property type="evidence" value="ECO:0007669"/>
    <property type="project" value="UniProtKB-UniRule"/>
</dbReference>
<dbReference type="CDD" id="cd18081">
    <property type="entry name" value="RlmH-like"/>
    <property type="match status" value="1"/>
</dbReference>
<dbReference type="Gene3D" id="3.40.1280.10">
    <property type="match status" value="1"/>
</dbReference>
<dbReference type="HAMAP" id="MF_00658">
    <property type="entry name" value="23SrRNA_methyltr_H"/>
    <property type="match status" value="1"/>
</dbReference>
<dbReference type="InterPro" id="IPR029028">
    <property type="entry name" value="Alpha/beta_knot_MTases"/>
</dbReference>
<dbReference type="InterPro" id="IPR003742">
    <property type="entry name" value="RlmH-like"/>
</dbReference>
<dbReference type="InterPro" id="IPR029026">
    <property type="entry name" value="tRNA_m1G_MTases_N"/>
</dbReference>
<dbReference type="PANTHER" id="PTHR33603">
    <property type="entry name" value="METHYLTRANSFERASE"/>
    <property type="match status" value="1"/>
</dbReference>
<dbReference type="PANTHER" id="PTHR33603:SF1">
    <property type="entry name" value="RIBOSOMAL RNA LARGE SUBUNIT METHYLTRANSFERASE H"/>
    <property type="match status" value="1"/>
</dbReference>
<dbReference type="Pfam" id="PF02590">
    <property type="entry name" value="SPOUT_MTase"/>
    <property type="match status" value="1"/>
</dbReference>
<dbReference type="PIRSF" id="PIRSF004505">
    <property type="entry name" value="MT_bac"/>
    <property type="match status" value="1"/>
</dbReference>
<dbReference type="SUPFAM" id="SSF75217">
    <property type="entry name" value="alpha/beta knot"/>
    <property type="match status" value="1"/>
</dbReference>
<accession>Q7U7D7</accession>
<gene>
    <name evidence="1" type="primary">rlmH</name>
    <name type="ordered locus">SYNW1048</name>
</gene>